<accession>P43307</accession>
<accession>A8K685</accession>
<accession>Q53GX2</accession>
<accession>Q53H19</accession>
<accession>Q5TAM3</accession>
<accession>Q6IB43</accession>
<accession>Q8NBH9</accession>
<accession>Q96IA2</accession>
<accession>Q9TNQ8</accession>
<accession>Q9UN49</accession>
<proteinExistence type="evidence at protein level"/>
<reference key="1">
    <citation type="journal article" date="1994" name="FEBS Lett.">
        <title>The N-terminal region of the alpha-subunit of the TRAP complex has a conserved cluster of negative charges.</title>
        <authorList>
            <person name="Hartmann E."/>
            <person name="Prehn S."/>
        </authorList>
    </citation>
    <scope>NUCLEOTIDE SEQUENCE [MRNA] (ISOFORM 1)</scope>
    <scope>VARIANT SER-28</scope>
</reference>
<reference key="2">
    <citation type="journal article" date="1999" name="FEBS Lett.">
        <title>Translocon-associated protein alpha transcripts are induced by granulocyte-macrophage colony-stimulating factor and exhibit complex alternative polyadenylation.</title>
        <authorList>
            <person name="Hirama T."/>
            <person name="Miller C.W."/>
            <person name="Koeffler H.P."/>
        </authorList>
    </citation>
    <scope>NUCLEOTIDE SEQUENCE [MRNA] (ISOFORM 1)</scope>
</reference>
<reference key="3">
    <citation type="submission" date="2003-05" db="EMBL/GenBank/DDBJ databases">
        <title>Cloning of human full-length CDSs in BD Creator(TM) system donor vector.</title>
        <authorList>
            <person name="Kalnine N."/>
            <person name="Chen X."/>
            <person name="Rolfs A."/>
            <person name="Halleck A."/>
            <person name="Hines L."/>
            <person name="Eisenstein S."/>
            <person name="Koundinya M."/>
            <person name="Raphael J."/>
            <person name="Moreira D."/>
            <person name="Kelley T."/>
            <person name="LaBaer J."/>
            <person name="Lin Y."/>
            <person name="Phelan M."/>
            <person name="Farmer A."/>
        </authorList>
    </citation>
    <scope>NUCLEOTIDE SEQUENCE [LARGE SCALE MRNA] (ISOFORM 1)</scope>
</reference>
<reference key="4">
    <citation type="journal article" date="2004" name="Nat. Genet.">
        <title>Complete sequencing and characterization of 21,243 full-length human cDNAs.</title>
        <authorList>
            <person name="Ota T."/>
            <person name="Suzuki Y."/>
            <person name="Nishikawa T."/>
            <person name="Otsuki T."/>
            <person name="Sugiyama T."/>
            <person name="Irie R."/>
            <person name="Wakamatsu A."/>
            <person name="Hayashi K."/>
            <person name="Sato H."/>
            <person name="Nagai K."/>
            <person name="Kimura K."/>
            <person name="Makita H."/>
            <person name="Sekine M."/>
            <person name="Obayashi M."/>
            <person name="Nishi T."/>
            <person name="Shibahara T."/>
            <person name="Tanaka T."/>
            <person name="Ishii S."/>
            <person name="Yamamoto J."/>
            <person name="Saito K."/>
            <person name="Kawai Y."/>
            <person name="Isono Y."/>
            <person name="Nakamura Y."/>
            <person name="Nagahari K."/>
            <person name="Murakami K."/>
            <person name="Yasuda T."/>
            <person name="Iwayanagi T."/>
            <person name="Wagatsuma M."/>
            <person name="Shiratori A."/>
            <person name="Sudo H."/>
            <person name="Hosoiri T."/>
            <person name="Kaku Y."/>
            <person name="Kodaira H."/>
            <person name="Kondo H."/>
            <person name="Sugawara M."/>
            <person name="Takahashi M."/>
            <person name="Kanda K."/>
            <person name="Yokoi T."/>
            <person name="Furuya T."/>
            <person name="Kikkawa E."/>
            <person name="Omura Y."/>
            <person name="Abe K."/>
            <person name="Kamihara K."/>
            <person name="Katsuta N."/>
            <person name="Sato K."/>
            <person name="Tanikawa M."/>
            <person name="Yamazaki M."/>
            <person name="Ninomiya K."/>
            <person name="Ishibashi T."/>
            <person name="Yamashita H."/>
            <person name="Murakawa K."/>
            <person name="Fujimori K."/>
            <person name="Tanai H."/>
            <person name="Kimata M."/>
            <person name="Watanabe M."/>
            <person name="Hiraoka S."/>
            <person name="Chiba Y."/>
            <person name="Ishida S."/>
            <person name="Ono Y."/>
            <person name="Takiguchi S."/>
            <person name="Watanabe S."/>
            <person name="Yosida M."/>
            <person name="Hotuta T."/>
            <person name="Kusano J."/>
            <person name="Kanehori K."/>
            <person name="Takahashi-Fujii A."/>
            <person name="Hara H."/>
            <person name="Tanase T.-O."/>
            <person name="Nomura Y."/>
            <person name="Togiya S."/>
            <person name="Komai F."/>
            <person name="Hara R."/>
            <person name="Takeuchi K."/>
            <person name="Arita M."/>
            <person name="Imose N."/>
            <person name="Musashino K."/>
            <person name="Yuuki H."/>
            <person name="Oshima A."/>
            <person name="Sasaki N."/>
            <person name="Aotsuka S."/>
            <person name="Yoshikawa Y."/>
            <person name="Matsunawa H."/>
            <person name="Ichihara T."/>
            <person name="Shiohata N."/>
            <person name="Sano S."/>
            <person name="Moriya S."/>
            <person name="Momiyama H."/>
            <person name="Satoh N."/>
            <person name="Takami S."/>
            <person name="Terashima Y."/>
            <person name="Suzuki O."/>
            <person name="Nakagawa S."/>
            <person name="Senoh A."/>
            <person name="Mizoguchi H."/>
            <person name="Goto Y."/>
            <person name="Shimizu F."/>
            <person name="Wakebe H."/>
            <person name="Hishigaki H."/>
            <person name="Watanabe T."/>
            <person name="Sugiyama A."/>
            <person name="Takemoto M."/>
            <person name="Kawakami B."/>
            <person name="Yamazaki M."/>
            <person name="Watanabe K."/>
            <person name="Kumagai A."/>
            <person name="Itakura S."/>
            <person name="Fukuzumi Y."/>
            <person name="Fujimori Y."/>
            <person name="Komiyama M."/>
            <person name="Tashiro H."/>
            <person name="Tanigami A."/>
            <person name="Fujiwara T."/>
            <person name="Ono T."/>
            <person name="Yamada K."/>
            <person name="Fujii Y."/>
            <person name="Ozaki K."/>
            <person name="Hirao M."/>
            <person name="Ohmori Y."/>
            <person name="Kawabata A."/>
            <person name="Hikiji T."/>
            <person name="Kobatake N."/>
            <person name="Inagaki H."/>
            <person name="Ikema Y."/>
            <person name="Okamoto S."/>
            <person name="Okitani R."/>
            <person name="Kawakami T."/>
            <person name="Noguchi S."/>
            <person name="Itoh T."/>
            <person name="Shigeta K."/>
            <person name="Senba T."/>
            <person name="Matsumura K."/>
            <person name="Nakajima Y."/>
            <person name="Mizuno T."/>
            <person name="Morinaga M."/>
            <person name="Sasaki M."/>
            <person name="Togashi T."/>
            <person name="Oyama M."/>
            <person name="Hata H."/>
            <person name="Watanabe M."/>
            <person name="Komatsu T."/>
            <person name="Mizushima-Sugano J."/>
            <person name="Satoh T."/>
            <person name="Shirai Y."/>
            <person name="Takahashi Y."/>
            <person name="Nakagawa K."/>
            <person name="Okumura K."/>
            <person name="Nagase T."/>
            <person name="Nomura N."/>
            <person name="Kikuchi H."/>
            <person name="Masuho Y."/>
            <person name="Yamashita R."/>
            <person name="Nakai K."/>
            <person name="Yada T."/>
            <person name="Nakamura Y."/>
            <person name="Ohara O."/>
            <person name="Isogai T."/>
            <person name="Sugano S."/>
        </authorList>
    </citation>
    <scope>NUCLEOTIDE SEQUENCE [LARGE SCALE MRNA] (ISOFORM 1)</scope>
    <source>
        <tissue>Placenta</tissue>
    </source>
</reference>
<reference key="5">
    <citation type="submission" date="2004-06" db="EMBL/GenBank/DDBJ databases">
        <title>Cloning of human full open reading frames in Gateway(TM) system entry vector (pDONR201).</title>
        <authorList>
            <person name="Ebert L."/>
            <person name="Schick M."/>
            <person name="Neubert P."/>
            <person name="Schatten R."/>
            <person name="Henze S."/>
            <person name="Korn B."/>
        </authorList>
    </citation>
    <scope>NUCLEOTIDE SEQUENCE [LARGE SCALE MRNA] (ISOFORM 1)</scope>
</reference>
<reference key="6">
    <citation type="submission" date="2005-04" db="EMBL/GenBank/DDBJ databases">
        <authorList>
            <person name="Suzuki Y."/>
            <person name="Sugano S."/>
            <person name="Totoki Y."/>
            <person name="Toyoda A."/>
            <person name="Takeda T."/>
            <person name="Sakaki Y."/>
            <person name="Tanaka A."/>
            <person name="Yokoyama S."/>
        </authorList>
    </citation>
    <scope>NUCLEOTIDE SEQUENCE [LARGE SCALE MRNA] (ISOFORM 1)</scope>
    <scope>VARIANT SER-28</scope>
    <source>
        <tissue>Liver</tissue>
    </source>
</reference>
<reference key="7">
    <citation type="journal article" date="2005" name="DNA Res.">
        <title>Signal sequence and keyword trap in silico for selection of full-length human cDNAs encoding secretion or membrane proteins from oligo-capped cDNA libraries.</title>
        <authorList>
            <person name="Otsuki T."/>
            <person name="Ota T."/>
            <person name="Nishikawa T."/>
            <person name="Hayashi K."/>
            <person name="Suzuki Y."/>
            <person name="Yamamoto J."/>
            <person name="Wakamatsu A."/>
            <person name="Kimura K."/>
            <person name="Sakamoto K."/>
            <person name="Hatano N."/>
            <person name="Kawai Y."/>
            <person name="Ishii S."/>
            <person name="Saito K."/>
            <person name="Kojima S."/>
            <person name="Sugiyama T."/>
            <person name="Ono T."/>
            <person name="Okano K."/>
            <person name="Yoshikawa Y."/>
            <person name="Aotsuka S."/>
            <person name="Sasaki N."/>
            <person name="Hattori A."/>
            <person name="Okumura K."/>
            <person name="Nagai K."/>
            <person name="Sugano S."/>
            <person name="Isogai T."/>
        </authorList>
    </citation>
    <scope>NUCLEOTIDE SEQUENCE [LARGE SCALE MRNA] (ISOFORM 2)</scope>
    <source>
        <tissue>Teratocarcinoma</tissue>
    </source>
</reference>
<reference key="8">
    <citation type="journal article" date="2003" name="Nature">
        <title>The DNA sequence and analysis of human chromosome 6.</title>
        <authorList>
            <person name="Mungall A.J."/>
            <person name="Palmer S.A."/>
            <person name="Sims S.K."/>
            <person name="Edwards C.A."/>
            <person name="Ashurst J.L."/>
            <person name="Wilming L."/>
            <person name="Jones M.C."/>
            <person name="Horton R."/>
            <person name="Hunt S.E."/>
            <person name="Scott C.E."/>
            <person name="Gilbert J.G.R."/>
            <person name="Clamp M.E."/>
            <person name="Bethel G."/>
            <person name="Milne S."/>
            <person name="Ainscough R."/>
            <person name="Almeida J.P."/>
            <person name="Ambrose K.D."/>
            <person name="Andrews T.D."/>
            <person name="Ashwell R.I.S."/>
            <person name="Babbage A.K."/>
            <person name="Bagguley C.L."/>
            <person name="Bailey J."/>
            <person name="Banerjee R."/>
            <person name="Barker D.J."/>
            <person name="Barlow K.F."/>
            <person name="Bates K."/>
            <person name="Beare D.M."/>
            <person name="Beasley H."/>
            <person name="Beasley O."/>
            <person name="Bird C.P."/>
            <person name="Blakey S.E."/>
            <person name="Bray-Allen S."/>
            <person name="Brook J."/>
            <person name="Brown A.J."/>
            <person name="Brown J.Y."/>
            <person name="Burford D.C."/>
            <person name="Burrill W."/>
            <person name="Burton J."/>
            <person name="Carder C."/>
            <person name="Carter N.P."/>
            <person name="Chapman J.C."/>
            <person name="Clark S.Y."/>
            <person name="Clark G."/>
            <person name="Clee C.M."/>
            <person name="Clegg S."/>
            <person name="Cobley V."/>
            <person name="Collier R.E."/>
            <person name="Collins J.E."/>
            <person name="Colman L.K."/>
            <person name="Corby N.R."/>
            <person name="Coville G.J."/>
            <person name="Culley K.M."/>
            <person name="Dhami P."/>
            <person name="Davies J."/>
            <person name="Dunn M."/>
            <person name="Earthrowl M.E."/>
            <person name="Ellington A.E."/>
            <person name="Evans K.A."/>
            <person name="Faulkner L."/>
            <person name="Francis M.D."/>
            <person name="Frankish A."/>
            <person name="Frankland J."/>
            <person name="French L."/>
            <person name="Garner P."/>
            <person name="Garnett J."/>
            <person name="Ghori M.J."/>
            <person name="Gilby L.M."/>
            <person name="Gillson C.J."/>
            <person name="Glithero R.J."/>
            <person name="Grafham D.V."/>
            <person name="Grant M."/>
            <person name="Gribble S."/>
            <person name="Griffiths C."/>
            <person name="Griffiths M.N.D."/>
            <person name="Hall R."/>
            <person name="Halls K.S."/>
            <person name="Hammond S."/>
            <person name="Harley J.L."/>
            <person name="Hart E.A."/>
            <person name="Heath P.D."/>
            <person name="Heathcott R."/>
            <person name="Holmes S.J."/>
            <person name="Howden P.J."/>
            <person name="Howe K.L."/>
            <person name="Howell G.R."/>
            <person name="Huckle E."/>
            <person name="Humphray S.J."/>
            <person name="Humphries M.D."/>
            <person name="Hunt A.R."/>
            <person name="Johnson C.M."/>
            <person name="Joy A.A."/>
            <person name="Kay M."/>
            <person name="Keenan S.J."/>
            <person name="Kimberley A.M."/>
            <person name="King A."/>
            <person name="Laird G.K."/>
            <person name="Langford C."/>
            <person name="Lawlor S."/>
            <person name="Leongamornlert D.A."/>
            <person name="Leversha M."/>
            <person name="Lloyd C.R."/>
            <person name="Lloyd D.M."/>
            <person name="Loveland J.E."/>
            <person name="Lovell J."/>
            <person name="Martin S."/>
            <person name="Mashreghi-Mohammadi M."/>
            <person name="Maslen G.L."/>
            <person name="Matthews L."/>
            <person name="McCann O.T."/>
            <person name="McLaren S.J."/>
            <person name="McLay K."/>
            <person name="McMurray A."/>
            <person name="Moore M.J.F."/>
            <person name="Mullikin J.C."/>
            <person name="Niblett D."/>
            <person name="Nickerson T."/>
            <person name="Novik K.L."/>
            <person name="Oliver K."/>
            <person name="Overton-Larty E.K."/>
            <person name="Parker A."/>
            <person name="Patel R."/>
            <person name="Pearce A.V."/>
            <person name="Peck A.I."/>
            <person name="Phillimore B.J.C.T."/>
            <person name="Phillips S."/>
            <person name="Plumb R.W."/>
            <person name="Porter K.M."/>
            <person name="Ramsey Y."/>
            <person name="Ranby S.A."/>
            <person name="Rice C.M."/>
            <person name="Ross M.T."/>
            <person name="Searle S.M."/>
            <person name="Sehra H.K."/>
            <person name="Sheridan E."/>
            <person name="Skuce C.D."/>
            <person name="Smith S."/>
            <person name="Smith M."/>
            <person name="Spraggon L."/>
            <person name="Squares S.L."/>
            <person name="Steward C.A."/>
            <person name="Sycamore N."/>
            <person name="Tamlyn-Hall G."/>
            <person name="Tester J."/>
            <person name="Theaker A.J."/>
            <person name="Thomas D.W."/>
            <person name="Thorpe A."/>
            <person name="Tracey A."/>
            <person name="Tromans A."/>
            <person name="Tubby B."/>
            <person name="Wall M."/>
            <person name="Wallis J.M."/>
            <person name="West A.P."/>
            <person name="White S.S."/>
            <person name="Whitehead S.L."/>
            <person name="Whittaker H."/>
            <person name="Wild A."/>
            <person name="Willey D.J."/>
            <person name="Wilmer T.E."/>
            <person name="Wood J.M."/>
            <person name="Wray P.W."/>
            <person name="Wyatt J.C."/>
            <person name="Young L."/>
            <person name="Younger R.M."/>
            <person name="Bentley D.R."/>
            <person name="Coulson A."/>
            <person name="Durbin R.M."/>
            <person name="Hubbard T."/>
            <person name="Sulston J.E."/>
            <person name="Dunham I."/>
            <person name="Rogers J."/>
            <person name="Beck S."/>
        </authorList>
    </citation>
    <scope>NUCLEOTIDE SEQUENCE [LARGE SCALE GENOMIC DNA]</scope>
</reference>
<reference key="9">
    <citation type="journal article" date="2004" name="Genome Res.">
        <title>The status, quality, and expansion of the NIH full-length cDNA project: the Mammalian Gene Collection (MGC).</title>
        <authorList>
            <consortium name="The MGC Project Team"/>
        </authorList>
    </citation>
    <scope>NUCLEOTIDE SEQUENCE [LARGE SCALE MRNA] (ISOFORM 1)</scope>
    <source>
        <tissue>B-cell</tissue>
    </source>
</reference>
<reference key="10">
    <citation type="journal article" date="1992" name="Nature">
        <title>HLA-A2 molecules in an antigen-processing mutant cell contain signal sequence-derived peptides.</title>
        <authorList>
            <person name="Wei M.L."/>
            <person name="Cresswell P."/>
        </authorList>
    </citation>
    <scope>PROTEIN SEQUENCE OF 19-31</scope>
</reference>
<reference key="11">
    <citation type="journal article" date="2003" name="Nat. Biotechnol.">
        <title>Identification and quantification of N-linked glycoproteins using hydrazide chemistry, stable isotope labeling and mass spectrometry.</title>
        <authorList>
            <person name="Zhang H."/>
            <person name="Li X.-J."/>
            <person name="Martin D.B."/>
            <person name="Aebersold R."/>
        </authorList>
    </citation>
    <scope>GLYCOSYLATION AT ASN-136</scope>
</reference>
<reference key="12">
    <citation type="journal article" date="2006" name="Cell">
        <title>Global, in vivo, and site-specific phosphorylation dynamics in signaling networks.</title>
        <authorList>
            <person name="Olsen J.V."/>
            <person name="Blagoev B."/>
            <person name="Gnad F."/>
            <person name="Macek B."/>
            <person name="Kumar C."/>
            <person name="Mortensen P."/>
            <person name="Mann M."/>
        </authorList>
    </citation>
    <scope>PHOSPHORYLATION [LARGE SCALE ANALYSIS] AT SER-268</scope>
    <scope>IDENTIFICATION BY MASS SPECTROMETRY [LARGE SCALE ANALYSIS]</scope>
    <source>
        <tissue>Cervix carcinoma</tissue>
    </source>
</reference>
<reference key="13">
    <citation type="journal article" date="2008" name="Mol. Cell">
        <title>Kinase-selective enrichment enables quantitative phosphoproteomics of the kinome across the cell cycle.</title>
        <authorList>
            <person name="Daub H."/>
            <person name="Olsen J.V."/>
            <person name="Bairlein M."/>
            <person name="Gnad F."/>
            <person name="Oppermann F.S."/>
            <person name="Korner R."/>
            <person name="Greff Z."/>
            <person name="Keri G."/>
            <person name="Stemmann O."/>
            <person name="Mann M."/>
        </authorList>
    </citation>
    <scope>PHOSPHORYLATION [LARGE SCALE ANALYSIS] AT SER-268</scope>
    <scope>IDENTIFICATION BY MASS SPECTROMETRY [LARGE SCALE ANALYSIS]</scope>
    <source>
        <tissue>Cervix carcinoma</tissue>
    </source>
</reference>
<reference key="14">
    <citation type="journal article" date="2008" name="Proc. Natl. Acad. Sci. U.S.A.">
        <title>A quantitative atlas of mitotic phosphorylation.</title>
        <authorList>
            <person name="Dephoure N."/>
            <person name="Zhou C."/>
            <person name="Villen J."/>
            <person name="Beausoleil S.A."/>
            <person name="Bakalarski C.E."/>
            <person name="Elledge S.J."/>
            <person name="Gygi S.P."/>
        </authorList>
    </citation>
    <scope>PHOSPHORYLATION [LARGE SCALE ANALYSIS] AT SER-247 AND SER-268</scope>
    <scope>IDENTIFICATION BY MASS SPECTROMETRY [LARGE SCALE ANALYSIS]</scope>
    <source>
        <tissue>Cervix carcinoma</tissue>
    </source>
</reference>
<reference key="15">
    <citation type="journal article" date="2009" name="J. Proteome Res.">
        <title>Glycoproteomics analysis of human liver tissue by combination of multiple enzyme digestion and hydrazide chemistry.</title>
        <authorList>
            <person name="Chen R."/>
            <person name="Jiang X."/>
            <person name="Sun D."/>
            <person name="Han G."/>
            <person name="Wang F."/>
            <person name="Ye M."/>
            <person name="Wang L."/>
            <person name="Zou H."/>
        </authorList>
    </citation>
    <scope>GLYCOSYLATION [LARGE SCALE ANALYSIS] AT ASN-136 AND ASN-191</scope>
    <source>
        <tissue>Liver</tissue>
    </source>
</reference>
<reference key="16">
    <citation type="journal article" date="2009" name="Mol. Cell. Proteomics">
        <title>Large-scale proteomics analysis of the human kinome.</title>
        <authorList>
            <person name="Oppermann F.S."/>
            <person name="Gnad F."/>
            <person name="Olsen J.V."/>
            <person name="Hornberger R."/>
            <person name="Greff Z."/>
            <person name="Keri G."/>
            <person name="Mann M."/>
            <person name="Daub H."/>
        </authorList>
    </citation>
    <scope>PHOSPHORYLATION [LARGE SCALE ANALYSIS] AT SER-268</scope>
    <scope>IDENTIFICATION BY MASS SPECTROMETRY [LARGE SCALE ANALYSIS]</scope>
</reference>
<reference key="17">
    <citation type="journal article" date="2009" name="Sci. Signal.">
        <title>Quantitative phosphoproteomic analysis of T cell receptor signaling reveals system-wide modulation of protein-protein interactions.</title>
        <authorList>
            <person name="Mayya V."/>
            <person name="Lundgren D.H."/>
            <person name="Hwang S.-I."/>
            <person name="Rezaul K."/>
            <person name="Wu L."/>
            <person name="Eng J.K."/>
            <person name="Rodionov V."/>
            <person name="Han D.K."/>
        </authorList>
    </citation>
    <scope>PHOSPHORYLATION [LARGE SCALE ANALYSIS] AT SER-268</scope>
    <scope>IDENTIFICATION BY MASS SPECTROMETRY [LARGE SCALE ANALYSIS]</scope>
    <source>
        <tissue>Leukemic T-cell</tissue>
    </source>
</reference>
<reference key="18">
    <citation type="journal article" date="2010" name="Sci. Signal.">
        <title>Quantitative phosphoproteomics reveals widespread full phosphorylation site occupancy during mitosis.</title>
        <authorList>
            <person name="Olsen J.V."/>
            <person name="Vermeulen M."/>
            <person name="Santamaria A."/>
            <person name="Kumar C."/>
            <person name="Miller M.L."/>
            <person name="Jensen L.J."/>
            <person name="Gnad F."/>
            <person name="Cox J."/>
            <person name="Jensen T.S."/>
            <person name="Nigg E.A."/>
            <person name="Brunak S."/>
            <person name="Mann M."/>
        </authorList>
    </citation>
    <scope>PHOSPHORYLATION [LARGE SCALE ANALYSIS] AT THR-260 AND SER-268</scope>
    <scope>IDENTIFICATION BY MASS SPECTROMETRY [LARGE SCALE ANALYSIS]</scope>
    <source>
        <tissue>Cervix carcinoma</tissue>
    </source>
</reference>
<reference key="19">
    <citation type="journal article" date="2011" name="BMC Syst. Biol.">
        <title>Initial characterization of the human central proteome.</title>
        <authorList>
            <person name="Burkard T.R."/>
            <person name="Planyavsky M."/>
            <person name="Kaupe I."/>
            <person name="Breitwieser F.P."/>
            <person name="Buerckstuemmer T."/>
            <person name="Bennett K.L."/>
            <person name="Superti-Furga G."/>
            <person name="Colinge J."/>
        </authorList>
    </citation>
    <scope>IDENTIFICATION BY MASS SPECTROMETRY [LARGE SCALE ANALYSIS]</scope>
</reference>
<reference key="20">
    <citation type="journal article" date="2012" name="EMBO J.">
        <title>Palmitoylated calnexin is a key component of the ribosome-translocon complex.</title>
        <authorList>
            <person name="Lakkaraju A.K."/>
            <person name="Abrami L."/>
            <person name="Lemmin T."/>
            <person name="Blaskovic S."/>
            <person name="Kunz B."/>
            <person name="Kihara A."/>
            <person name="Dal Peraro M."/>
            <person name="van der Goot F.G."/>
        </authorList>
    </citation>
    <scope>INTERACTION WITH CALNEXIN</scope>
</reference>
<reference key="21">
    <citation type="journal article" date="2013" name="J. Proteome Res.">
        <title>Toward a comprehensive characterization of a human cancer cell phosphoproteome.</title>
        <authorList>
            <person name="Zhou H."/>
            <person name="Di Palma S."/>
            <person name="Preisinger C."/>
            <person name="Peng M."/>
            <person name="Polat A.N."/>
            <person name="Heck A.J."/>
            <person name="Mohammed S."/>
        </authorList>
    </citation>
    <scope>PHOSPHORYLATION [LARGE SCALE ANALYSIS] AT SER-268</scope>
    <scope>IDENTIFICATION BY MASS SPECTROMETRY [LARGE SCALE ANALYSIS]</scope>
    <source>
        <tissue>Cervix carcinoma</tissue>
        <tissue>Erythroleukemia</tissue>
    </source>
</reference>
<reference key="22">
    <citation type="journal article" date="2014" name="J. Proteomics">
        <title>An enzyme assisted RP-RPLC approach for in-depth analysis of human liver phosphoproteome.</title>
        <authorList>
            <person name="Bian Y."/>
            <person name="Song C."/>
            <person name="Cheng K."/>
            <person name="Dong M."/>
            <person name="Wang F."/>
            <person name="Huang J."/>
            <person name="Sun D."/>
            <person name="Wang L."/>
            <person name="Ye M."/>
            <person name="Zou H."/>
        </authorList>
    </citation>
    <scope>PHOSPHORYLATION [LARGE SCALE ANALYSIS] AT SER-268</scope>
    <scope>IDENTIFICATION BY MASS SPECTROMETRY [LARGE SCALE ANALYSIS]</scope>
    <source>
        <tissue>Liver</tissue>
    </source>
</reference>
<reference key="23">
    <citation type="journal article" date="2015" name="Proteomics">
        <title>N-terminome analysis of the human mitochondrial proteome.</title>
        <authorList>
            <person name="Vaca Jacome A.S."/>
            <person name="Rabilloud T."/>
            <person name="Schaeffer-Reiss C."/>
            <person name="Rompais M."/>
            <person name="Ayoub D."/>
            <person name="Lane L."/>
            <person name="Bairoch A."/>
            <person name="Van Dorsselaer A."/>
            <person name="Carapito C."/>
        </authorList>
    </citation>
    <scope>IDENTIFICATION BY MASS SPECTROMETRY [LARGE SCALE ANALYSIS]</scope>
</reference>
<reference evidence="12" key="24">
    <citation type="journal article" date="2023" name="Nature">
        <title>Visualization of translation and protein biogenesis at the ER membrane.</title>
        <authorList>
            <person name="Gemmer M."/>
            <person name="Chaillet M.L."/>
            <person name="van Loenhout J."/>
            <person name="Cuevas Arenas R."/>
            <person name="Vismpas D."/>
            <person name="Grollers-Mulderij M."/>
            <person name="Koh F.A."/>
            <person name="Albanese P."/>
            <person name="Scheltema R.A."/>
            <person name="Howes S.C."/>
            <person name="Kotecha A."/>
            <person name="Fedry J."/>
            <person name="Forster F."/>
        </authorList>
    </citation>
    <scope>STRUCTURE BY ELECTRON MICROSCOPY (7.60 ANGSTROMS) OF THE STT3A-CONTAINING OLIGOSACCHARYLTRANSFERASE (OST) AND TRANSLOCON COMPLEXES</scope>
    <scope>SUBUNIT</scope>
</reference>
<sequence>MRLLPRLLLLLLLVFPATVLFRGGPRGLLAVAQDLTEDEETVEDSIIEDEDDEAEVEEDEPTDLVEDKEEEDVSGEPEASPSADTTILFVKGEDFPANNIVKFLVGFTNKGTEDFIVESLDASFRYPQDYQFYIQNFTALPLNTVVPPQRQATFEYSFIPAEPMGGRPFGLVINLNYKDLNGNVFQDAVFNQTVTVIEREDGLDGETIFMYMFLAGLGLLVIVGLHQLLESRKRKRPIQKVEMGTSSQNDVDMSWIPQETLNQINKASPRRLPRKRAQKRSVGSDE</sequence>
<organism>
    <name type="scientific">Homo sapiens</name>
    <name type="common">Human</name>
    <dbReference type="NCBI Taxonomy" id="9606"/>
    <lineage>
        <taxon>Eukaryota</taxon>
        <taxon>Metazoa</taxon>
        <taxon>Chordata</taxon>
        <taxon>Craniata</taxon>
        <taxon>Vertebrata</taxon>
        <taxon>Euteleostomi</taxon>
        <taxon>Mammalia</taxon>
        <taxon>Eutheria</taxon>
        <taxon>Euarchontoglires</taxon>
        <taxon>Primates</taxon>
        <taxon>Haplorrhini</taxon>
        <taxon>Catarrhini</taxon>
        <taxon>Hominidae</taxon>
        <taxon>Homo</taxon>
    </lineage>
</organism>
<keyword id="KW-0002">3D-structure</keyword>
<keyword id="KW-0025">Alternative splicing</keyword>
<keyword id="KW-0106">Calcium</keyword>
<keyword id="KW-0903">Direct protein sequencing</keyword>
<keyword id="KW-0256">Endoplasmic reticulum</keyword>
<keyword id="KW-0325">Glycoprotein</keyword>
<keyword id="KW-0472">Membrane</keyword>
<keyword id="KW-0597">Phosphoprotein</keyword>
<keyword id="KW-1267">Proteomics identification</keyword>
<keyword id="KW-1185">Reference proteome</keyword>
<keyword id="KW-0732">Signal</keyword>
<keyword id="KW-0812">Transmembrane</keyword>
<keyword id="KW-1133">Transmembrane helix</keyword>
<feature type="signal peptide" evidence="4">
    <location>
        <begin position="1"/>
        <end position="18"/>
    </location>
</feature>
<feature type="chain" id="PRO_0000033281" description="Translocon-associated protein subunit alpha">
    <location>
        <begin position="19"/>
        <end position="286"/>
    </location>
</feature>
<feature type="topological domain" description="Lumenal" evidence="1">
    <location>
        <begin position="19"/>
        <end position="207"/>
    </location>
</feature>
<feature type="transmembrane region" description="Helical" evidence="1">
    <location>
        <begin position="208"/>
        <end position="228"/>
    </location>
</feature>
<feature type="topological domain" description="Cytoplasmic" evidence="1">
    <location>
        <begin position="229"/>
        <end position="286"/>
    </location>
</feature>
<feature type="region of interest" description="Disordered" evidence="2">
    <location>
        <begin position="39"/>
        <end position="83"/>
    </location>
</feature>
<feature type="region of interest" description="Disordered" evidence="2">
    <location>
        <begin position="261"/>
        <end position="286"/>
    </location>
</feature>
<feature type="compositionally biased region" description="Acidic residues" evidence="2">
    <location>
        <begin position="39"/>
        <end position="75"/>
    </location>
</feature>
<feature type="compositionally biased region" description="Basic residues" evidence="2">
    <location>
        <begin position="268"/>
        <end position="279"/>
    </location>
</feature>
<feature type="modified residue" description="Phosphoserine" evidence="14">
    <location>
        <position position="247"/>
    </location>
</feature>
<feature type="modified residue" description="Phosphothreonine" evidence="18">
    <location>
        <position position="260"/>
    </location>
</feature>
<feature type="modified residue" description="Phosphoserine" evidence="13 14 15 16 17 18 19 20">
    <location>
        <position position="268"/>
    </location>
</feature>
<feature type="glycosylation site" description="N-linked (GlcNAc...) asparagine" evidence="3 5">
    <location>
        <position position="136"/>
    </location>
</feature>
<feature type="glycosylation site" description="N-linked (GlcNAc...) asparagine" evidence="5">
    <location>
        <position position="191"/>
    </location>
</feature>
<feature type="splice variant" id="VSP_013621" description="In isoform 2." evidence="10">
    <location>
        <begin position="68"/>
        <end position="94"/>
    </location>
</feature>
<feature type="sequence variant" id="VAR_022427" description="In dbSNP:rs10004." evidence="8 9">
    <original>L</original>
    <variation>S</variation>
    <location>
        <position position="28"/>
    </location>
</feature>
<feature type="sequence conflict" description="In Ref. 7; BAC11701." evidence="11" ref="7">
    <original>R</original>
    <variation>G</variation>
    <location>
        <position position="6"/>
    </location>
</feature>
<feature type="sequence conflict" description="In Ref. 6; BAD96529." evidence="11" ref="6">
    <original>E</original>
    <variation>A</variation>
    <location>
        <position position="37"/>
    </location>
</feature>
<feature type="sequence conflict" description="In Ref. 1; CAA78290." evidence="11" ref="1">
    <original>Y</original>
    <variation>H</variation>
    <location>
        <position position="130"/>
    </location>
</feature>
<feature type="sequence conflict" description="In Ref. 4; BAF84239." evidence="11" ref="4">
    <original>F</original>
    <variation>Y</variation>
    <location>
        <position position="190"/>
    </location>
</feature>
<feature type="sequence conflict" description="In Ref. 6; BAD96529." evidence="11" ref="6">
    <original>L</original>
    <variation>P</variation>
    <location>
        <position position="220"/>
    </location>
</feature>
<feature type="sequence conflict" description="In Ref. 4; BAF84239." evidence="11" ref="4">
    <original>Q</original>
    <variation>R</variation>
    <location>
        <position position="263"/>
    </location>
</feature>
<feature type="sequence conflict" description="In Ref. 5; CAG33242." evidence="11" ref="5">
    <original>E</original>
    <variation>D</variation>
    <location>
        <position position="286"/>
    </location>
</feature>
<evidence type="ECO:0000255" key="1"/>
<evidence type="ECO:0000256" key="2">
    <source>
        <dbReference type="SAM" id="MobiDB-lite"/>
    </source>
</evidence>
<evidence type="ECO:0000269" key="3">
    <source>
    </source>
</evidence>
<evidence type="ECO:0000269" key="4">
    <source>
    </source>
</evidence>
<evidence type="ECO:0000269" key="5">
    <source>
    </source>
</evidence>
<evidence type="ECO:0000269" key="6">
    <source>
    </source>
</evidence>
<evidence type="ECO:0000269" key="7">
    <source>
    </source>
</evidence>
<evidence type="ECO:0000269" key="8">
    <source>
    </source>
</evidence>
<evidence type="ECO:0000269" key="9">
    <source ref="6"/>
</evidence>
<evidence type="ECO:0000303" key="10">
    <source>
    </source>
</evidence>
<evidence type="ECO:0000305" key="11"/>
<evidence type="ECO:0007744" key="12">
    <source>
        <dbReference type="PDB" id="8B6L"/>
    </source>
</evidence>
<evidence type="ECO:0007744" key="13">
    <source>
    </source>
</evidence>
<evidence type="ECO:0007744" key="14">
    <source>
    </source>
</evidence>
<evidence type="ECO:0007744" key="15">
    <source>
    </source>
</evidence>
<evidence type="ECO:0007744" key="16">
    <source>
    </source>
</evidence>
<evidence type="ECO:0007744" key="17">
    <source>
    </source>
</evidence>
<evidence type="ECO:0007744" key="18">
    <source>
    </source>
</evidence>
<evidence type="ECO:0007744" key="19">
    <source>
    </source>
</evidence>
<evidence type="ECO:0007744" key="20">
    <source>
    </source>
</evidence>
<comment type="function">
    <text>TRAP proteins are part of a complex whose function is to bind calcium to the ER membrane and thereby regulate the retention of ER resident proteins. May be involved in the recycling of the translocation apparatus after completion of the translocation process or may function as a membrane-bound chaperone facilitating folding of translocated proteins.</text>
</comment>
<comment type="subunit">
    <text evidence="6 7">Heterotetramer of TRAP-alpha, TRAP-beta, TRAP-delta and TRAP-gamma (PubMed:36697828). Interacts with palmitoylated calnexin (CALX), the interaction is required for efficient folding of glycosylated proteins (PubMed:22314232).</text>
</comment>
<comment type="interaction">
    <interactant intactId="EBI-714168">
        <id>P43307</id>
    </interactant>
    <interactant intactId="EBI-355947">
        <id>P27824</id>
        <label>CANX</label>
    </interactant>
    <organismsDiffer>false</organismsDiffer>
    <experiments>7</experiments>
</comment>
<comment type="interaction">
    <interactant intactId="EBI-714168">
        <id>P43307</id>
    </interactant>
    <interactant intactId="EBI-1788819">
        <id>P60468</id>
        <label>SEC61B</label>
    </interactant>
    <organismsDiffer>false</organismsDiffer>
    <experiments>2</experiments>
</comment>
<comment type="interaction">
    <interactant intactId="EBI-714168">
        <id>P43307</id>
    </interactant>
    <interactant intactId="EBI-986224">
        <id>P01009</id>
        <label>SERPINA1</label>
    </interactant>
    <organismsDiffer>false</organismsDiffer>
    <experiments>4</experiments>
</comment>
<comment type="subcellular location">
    <subcellularLocation>
        <location>Endoplasmic reticulum membrane</location>
        <topology>Single-pass type I membrane protein</topology>
    </subcellularLocation>
</comment>
<comment type="alternative products">
    <event type="alternative splicing"/>
    <isoform>
        <id>P43307-1</id>
        <name>1</name>
        <sequence type="displayed"/>
    </isoform>
    <isoform>
        <id>P43307-2</id>
        <name>2</name>
        <sequence type="described" ref="VSP_013621"/>
    </isoform>
</comment>
<comment type="domain">
    <text>Shows a remarkable charge distribution with the N-terminus being highly negatively charged, and the cytoplasmic C-terminus positively charged.</text>
</comment>
<comment type="miscellaneous">
    <text>Seems to bind calcium.</text>
</comment>
<comment type="similarity">
    <text evidence="11">Belongs to the TRAP-alpha family.</text>
</comment>
<dbReference type="EMBL" id="Z12830">
    <property type="protein sequence ID" value="CAA78290.1"/>
    <property type="molecule type" value="mRNA"/>
</dbReference>
<dbReference type="EMBL" id="AF156965">
    <property type="protein sequence ID" value="AAD48778.1"/>
    <property type="molecule type" value="mRNA"/>
</dbReference>
<dbReference type="EMBL" id="BT007387">
    <property type="protein sequence ID" value="AAP36051.1"/>
    <property type="molecule type" value="mRNA"/>
</dbReference>
<dbReference type="EMBL" id="AK291550">
    <property type="protein sequence ID" value="BAF84239.1"/>
    <property type="molecule type" value="mRNA"/>
</dbReference>
<dbReference type="EMBL" id="CR456961">
    <property type="protein sequence ID" value="CAG33242.1"/>
    <property type="molecule type" value="mRNA"/>
</dbReference>
<dbReference type="EMBL" id="AK222762">
    <property type="protein sequence ID" value="BAD96482.1"/>
    <property type="molecule type" value="mRNA"/>
</dbReference>
<dbReference type="EMBL" id="AK222809">
    <property type="protein sequence ID" value="BAD96529.1"/>
    <property type="molecule type" value="mRNA"/>
</dbReference>
<dbReference type="EMBL" id="AK075562">
    <property type="protein sequence ID" value="BAC11701.1"/>
    <property type="molecule type" value="mRNA"/>
</dbReference>
<dbReference type="EMBL" id="AL139095">
    <property type="status" value="NOT_ANNOTATED_CDS"/>
    <property type="molecule type" value="Genomic_DNA"/>
</dbReference>
<dbReference type="EMBL" id="BC007710">
    <property type="protein sequence ID" value="AAH07710.1"/>
    <property type="molecule type" value="mRNA"/>
</dbReference>
<dbReference type="CCDS" id="CCDS4499.1">
    <molecule id="P43307-1"/>
</dbReference>
<dbReference type="PIR" id="I38246">
    <property type="entry name" value="I38246"/>
</dbReference>
<dbReference type="RefSeq" id="NP_001278937.1">
    <property type="nucleotide sequence ID" value="NM_001292008.1"/>
</dbReference>
<dbReference type="RefSeq" id="NP_003135.2">
    <molecule id="P43307-1"/>
    <property type="nucleotide sequence ID" value="NM_003144.5"/>
</dbReference>
<dbReference type="PDB" id="8B6L">
    <property type="method" value="EM"/>
    <property type="resolution" value="7.60 A"/>
    <property type="chains" value="E=1-286"/>
</dbReference>
<dbReference type="PDBsum" id="8B6L"/>
<dbReference type="EMDB" id="EMD-15870"/>
<dbReference type="SMR" id="P43307"/>
<dbReference type="BioGRID" id="112623">
    <property type="interactions" value="464"/>
</dbReference>
<dbReference type="ComplexPortal" id="CPX-8024">
    <property type="entry name" value="Translocon-associated protein complex"/>
</dbReference>
<dbReference type="FunCoup" id="P43307">
    <property type="interactions" value="2831"/>
</dbReference>
<dbReference type="IntAct" id="P43307">
    <property type="interactions" value="106"/>
</dbReference>
<dbReference type="MINT" id="P43307"/>
<dbReference type="STRING" id="9606.ENSP00000244763"/>
<dbReference type="TCDB" id="3.A.5.9.1">
    <property type="family name" value="the general secretory pathway (sec) family"/>
</dbReference>
<dbReference type="GlyConnect" id="1839">
    <property type="glycosylation" value="29 N-Linked glycans (2 sites)"/>
</dbReference>
<dbReference type="GlyCosmos" id="P43307">
    <property type="glycosylation" value="2 sites, 32 glycans"/>
</dbReference>
<dbReference type="GlyGen" id="P43307">
    <property type="glycosylation" value="8 sites, 53 N-linked glycans (2 sites), 1 O-linked glycan (2 sites)"/>
</dbReference>
<dbReference type="iPTMnet" id="P43307"/>
<dbReference type="MetOSite" id="P43307"/>
<dbReference type="PhosphoSitePlus" id="P43307"/>
<dbReference type="BioMuta" id="SSR1"/>
<dbReference type="DMDM" id="22261821"/>
<dbReference type="CPTAC" id="CPTAC-593"/>
<dbReference type="CPTAC" id="CPTAC-594"/>
<dbReference type="jPOST" id="P43307"/>
<dbReference type="MassIVE" id="P43307"/>
<dbReference type="PaxDb" id="9606-ENSP00000244763"/>
<dbReference type="PeptideAtlas" id="P43307"/>
<dbReference type="ProteomicsDB" id="55609">
    <molecule id="P43307-1"/>
</dbReference>
<dbReference type="ProteomicsDB" id="55610">
    <molecule id="P43307-2"/>
</dbReference>
<dbReference type="Pumba" id="P43307"/>
<dbReference type="TopDownProteomics" id="P43307-1">
    <molecule id="P43307-1"/>
</dbReference>
<dbReference type="TopDownProteomics" id="P43307-2">
    <molecule id="P43307-2"/>
</dbReference>
<dbReference type="Antibodypedia" id="2405">
    <property type="antibodies" value="270 antibodies from 30 providers"/>
</dbReference>
<dbReference type="DNASU" id="6745"/>
<dbReference type="Ensembl" id="ENST00000244763.9">
    <molecule id="P43307-1"/>
    <property type="protein sequence ID" value="ENSP00000244763.4"/>
    <property type="gene ID" value="ENSG00000124783.14"/>
</dbReference>
<dbReference type="GeneID" id="6745"/>
<dbReference type="KEGG" id="hsa:6745"/>
<dbReference type="MANE-Select" id="ENST00000244763.9">
    <property type="protein sequence ID" value="ENSP00000244763.4"/>
    <property type="RefSeq nucleotide sequence ID" value="NM_003144.5"/>
    <property type="RefSeq protein sequence ID" value="NP_003135.2"/>
</dbReference>
<dbReference type="UCSC" id="uc003mxf.6">
    <molecule id="P43307-1"/>
    <property type="organism name" value="human"/>
</dbReference>
<dbReference type="AGR" id="HGNC:11323"/>
<dbReference type="CTD" id="6745"/>
<dbReference type="DisGeNET" id="6745"/>
<dbReference type="GeneCards" id="SSR1"/>
<dbReference type="HGNC" id="HGNC:11323">
    <property type="gene designation" value="SSR1"/>
</dbReference>
<dbReference type="HPA" id="ENSG00000124783">
    <property type="expression patterns" value="Low tissue specificity"/>
</dbReference>
<dbReference type="MIM" id="600868">
    <property type="type" value="gene"/>
</dbReference>
<dbReference type="neXtProt" id="NX_P43307"/>
<dbReference type="OpenTargets" id="ENSG00000124783"/>
<dbReference type="PharmGKB" id="PA36147"/>
<dbReference type="VEuPathDB" id="HostDB:ENSG00000124783"/>
<dbReference type="eggNOG" id="KOG1631">
    <property type="taxonomic scope" value="Eukaryota"/>
</dbReference>
<dbReference type="GeneTree" id="ENSGT00400000022103"/>
<dbReference type="HOGENOM" id="CLU_073618_0_0_1"/>
<dbReference type="InParanoid" id="P43307"/>
<dbReference type="OMA" id="TFPYSFT"/>
<dbReference type="OrthoDB" id="1926781at2759"/>
<dbReference type="PAN-GO" id="P43307">
    <property type="GO annotations" value="1 GO annotation based on evolutionary models"/>
</dbReference>
<dbReference type="PhylomeDB" id="P43307"/>
<dbReference type="TreeFam" id="TF321074"/>
<dbReference type="PathwayCommons" id="P43307"/>
<dbReference type="Reactome" id="R-HSA-1799339">
    <property type="pathway name" value="SRP-dependent cotranslational protein targeting to membrane"/>
</dbReference>
<dbReference type="Reactome" id="R-HSA-381038">
    <property type="pathway name" value="XBP1(S) activates chaperone genes"/>
</dbReference>
<dbReference type="SignaLink" id="P43307"/>
<dbReference type="BioGRID-ORCS" id="6745">
    <property type="hits" value="34 hits in 1167 CRISPR screens"/>
</dbReference>
<dbReference type="ChiTaRS" id="SSR1">
    <property type="organism name" value="human"/>
</dbReference>
<dbReference type="GeneWiki" id="SSR1"/>
<dbReference type="GenomeRNAi" id="6745"/>
<dbReference type="Pharos" id="P43307">
    <property type="development level" value="Tbio"/>
</dbReference>
<dbReference type="PRO" id="PR:P43307"/>
<dbReference type="Proteomes" id="UP000005640">
    <property type="component" value="Chromosome 6"/>
</dbReference>
<dbReference type="RNAct" id="P43307">
    <property type="molecule type" value="protein"/>
</dbReference>
<dbReference type="Bgee" id="ENSG00000124783">
    <property type="expression patterns" value="Expressed in corpus epididymis and 215 other cell types or tissues"/>
</dbReference>
<dbReference type="ExpressionAtlas" id="P43307">
    <property type="expression patterns" value="baseline and differential"/>
</dbReference>
<dbReference type="GO" id="GO:0005783">
    <property type="term" value="C:endoplasmic reticulum"/>
    <property type="evidence" value="ECO:0000314"/>
    <property type="project" value="HPA"/>
</dbReference>
<dbReference type="GO" id="GO:0005789">
    <property type="term" value="C:endoplasmic reticulum membrane"/>
    <property type="evidence" value="ECO:0000304"/>
    <property type="project" value="Reactome"/>
</dbReference>
<dbReference type="GO" id="GO:0016020">
    <property type="term" value="C:membrane"/>
    <property type="evidence" value="ECO:0000304"/>
    <property type="project" value="ProtInc"/>
</dbReference>
<dbReference type="GO" id="GO:0006613">
    <property type="term" value="P:cotranslational protein targeting to membrane"/>
    <property type="evidence" value="ECO:0000304"/>
    <property type="project" value="ProtInc"/>
</dbReference>
<dbReference type="GO" id="GO:0008284">
    <property type="term" value="P:positive regulation of cell population proliferation"/>
    <property type="evidence" value="ECO:0000304"/>
    <property type="project" value="ProtInc"/>
</dbReference>
<dbReference type="InterPro" id="IPR005595">
    <property type="entry name" value="TRAP_alpha"/>
</dbReference>
<dbReference type="PANTHER" id="PTHR12924:SF0">
    <property type="entry name" value="TRANSLOCON-ASSOCIATED PROTEIN SUBUNIT ALPHA"/>
    <property type="match status" value="1"/>
</dbReference>
<dbReference type="PANTHER" id="PTHR12924">
    <property type="entry name" value="TRANSLOCON-ASSOCIATED PROTEIN, ALPHA SUBUNIT"/>
    <property type="match status" value="1"/>
</dbReference>
<dbReference type="Pfam" id="PF03896">
    <property type="entry name" value="TRAP_alpha"/>
    <property type="match status" value="1"/>
</dbReference>
<protein>
    <recommendedName>
        <fullName>Translocon-associated protein subunit alpha</fullName>
        <shortName>TRAP-alpha</shortName>
    </recommendedName>
    <alternativeName>
        <fullName>Signal sequence receptor subunit alpha</fullName>
        <shortName>SSR-alpha</shortName>
    </alternativeName>
</protein>
<name>SSRA_HUMAN</name>
<gene>
    <name type="primary">SSR1</name>
    <name type="synonym">TRAPA</name>
    <name type="ORF">PSEC0262</name>
</gene>